<dbReference type="EMBL" id="CP001068">
    <property type="protein sequence ID" value="ACD28414.1"/>
    <property type="molecule type" value="Genomic_DNA"/>
</dbReference>
<dbReference type="SMR" id="B2UEL4"/>
<dbReference type="STRING" id="402626.Rpic_3292"/>
<dbReference type="KEGG" id="rpi:Rpic_3292"/>
<dbReference type="eggNOG" id="COG0091">
    <property type="taxonomic scope" value="Bacteria"/>
</dbReference>
<dbReference type="HOGENOM" id="CLU_083987_3_3_4"/>
<dbReference type="GO" id="GO:0022625">
    <property type="term" value="C:cytosolic large ribosomal subunit"/>
    <property type="evidence" value="ECO:0007669"/>
    <property type="project" value="TreeGrafter"/>
</dbReference>
<dbReference type="GO" id="GO:0019843">
    <property type="term" value="F:rRNA binding"/>
    <property type="evidence" value="ECO:0007669"/>
    <property type="project" value="UniProtKB-UniRule"/>
</dbReference>
<dbReference type="GO" id="GO:0003735">
    <property type="term" value="F:structural constituent of ribosome"/>
    <property type="evidence" value="ECO:0007669"/>
    <property type="project" value="InterPro"/>
</dbReference>
<dbReference type="GO" id="GO:0006412">
    <property type="term" value="P:translation"/>
    <property type="evidence" value="ECO:0007669"/>
    <property type="project" value="UniProtKB-UniRule"/>
</dbReference>
<dbReference type="CDD" id="cd00336">
    <property type="entry name" value="Ribosomal_L22"/>
    <property type="match status" value="1"/>
</dbReference>
<dbReference type="FunFam" id="3.90.470.10:FF:000001">
    <property type="entry name" value="50S ribosomal protein L22"/>
    <property type="match status" value="1"/>
</dbReference>
<dbReference type="Gene3D" id="3.90.470.10">
    <property type="entry name" value="Ribosomal protein L22/L17"/>
    <property type="match status" value="1"/>
</dbReference>
<dbReference type="HAMAP" id="MF_01331_B">
    <property type="entry name" value="Ribosomal_uL22_B"/>
    <property type="match status" value="1"/>
</dbReference>
<dbReference type="InterPro" id="IPR001063">
    <property type="entry name" value="Ribosomal_uL22"/>
</dbReference>
<dbReference type="InterPro" id="IPR005727">
    <property type="entry name" value="Ribosomal_uL22_bac/chlpt-type"/>
</dbReference>
<dbReference type="InterPro" id="IPR047867">
    <property type="entry name" value="Ribosomal_uL22_bac/org-type"/>
</dbReference>
<dbReference type="InterPro" id="IPR018260">
    <property type="entry name" value="Ribosomal_uL22_CS"/>
</dbReference>
<dbReference type="InterPro" id="IPR036394">
    <property type="entry name" value="Ribosomal_uL22_sf"/>
</dbReference>
<dbReference type="NCBIfam" id="TIGR01044">
    <property type="entry name" value="rplV_bact"/>
    <property type="match status" value="1"/>
</dbReference>
<dbReference type="PANTHER" id="PTHR13501">
    <property type="entry name" value="CHLOROPLAST 50S RIBOSOMAL PROTEIN L22-RELATED"/>
    <property type="match status" value="1"/>
</dbReference>
<dbReference type="PANTHER" id="PTHR13501:SF8">
    <property type="entry name" value="LARGE RIBOSOMAL SUBUNIT PROTEIN UL22M"/>
    <property type="match status" value="1"/>
</dbReference>
<dbReference type="Pfam" id="PF00237">
    <property type="entry name" value="Ribosomal_L22"/>
    <property type="match status" value="1"/>
</dbReference>
<dbReference type="SUPFAM" id="SSF54843">
    <property type="entry name" value="Ribosomal protein L22"/>
    <property type="match status" value="1"/>
</dbReference>
<dbReference type="PROSITE" id="PS00464">
    <property type="entry name" value="RIBOSOMAL_L22"/>
    <property type="match status" value="1"/>
</dbReference>
<sequence length="109" mass="11936">MEVKAIHRGARISAQKTRLVADQIRGLSIERALNVLTFSPKKAAGIVKKVVESAIANAEHNEGADIDELKVKSIYIDKATSLKRFTARAKGRGNRIEKQTCHITVTLGN</sequence>
<accession>B2UEL4</accession>
<proteinExistence type="inferred from homology"/>
<protein>
    <recommendedName>
        <fullName evidence="1">Large ribosomal subunit protein uL22</fullName>
    </recommendedName>
    <alternativeName>
        <fullName evidence="2">50S ribosomal protein L22</fullName>
    </alternativeName>
</protein>
<name>RL22_RALPJ</name>
<comment type="function">
    <text evidence="1">This protein binds specifically to 23S rRNA; its binding is stimulated by other ribosomal proteins, e.g. L4, L17, and L20. It is important during the early stages of 50S assembly. It makes multiple contacts with different domains of the 23S rRNA in the assembled 50S subunit and ribosome (By similarity).</text>
</comment>
<comment type="function">
    <text evidence="1">The globular domain of the protein is located near the polypeptide exit tunnel on the outside of the subunit, while an extended beta-hairpin is found that lines the wall of the exit tunnel in the center of the 70S ribosome.</text>
</comment>
<comment type="subunit">
    <text evidence="1">Part of the 50S ribosomal subunit.</text>
</comment>
<comment type="similarity">
    <text evidence="1">Belongs to the universal ribosomal protein uL22 family.</text>
</comment>
<feature type="chain" id="PRO_1000142298" description="Large ribosomal subunit protein uL22">
    <location>
        <begin position="1"/>
        <end position="109"/>
    </location>
</feature>
<gene>
    <name evidence="1" type="primary">rplV</name>
    <name type="ordered locus">Rpic_3292</name>
</gene>
<reference key="1">
    <citation type="submission" date="2008-05" db="EMBL/GenBank/DDBJ databases">
        <title>Complete sequence of chromosome 1 of Ralstonia pickettii 12J.</title>
        <authorList>
            <person name="Lucas S."/>
            <person name="Copeland A."/>
            <person name="Lapidus A."/>
            <person name="Glavina del Rio T."/>
            <person name="Dalin E."/>
            <person name="Tice H."/>
            <person name="Bruce D."/>
            <person name="Goodwin L."/>
            <person name="Pitluck S."/>
            <person name="Meincke L."/>
            <person name="Brettin T."/>
            <person name="Detter J.C."/>
            <person name="Han C."/>
            <person name="Kuske C.R."/>
            <person name="Schmutz J."/>
            <person name="Larimer F."/>
            <person name="Land M."/>
            <person name="Hauser L."/>
            <person name="Kyrpides N."/>
            <person name="Mikhailova N."/>
            <person name="Marsh T."/>
            <person name="Richardson P."/>
        </authorList>
    </citation>
    <scope>NUCLEOTIDE SEQUENCE [LARGE SCALE GENOMIC DNA]</scope>
    <source>
        <strain>12J</strain>
    </source>
</reference>
<organism>
    <name type="scientific">Ralstonia pickettii (strain 12J)</name>
    <dbReference type="NCBI Taxonomy" id="402626"/>
    <lineage>
        <taxon>Bacteria</taxon>
        <taxon>Pseudomonadati</taxon>
        <taxon>Pseudomonadota</taxon>
        <taxon>Betaproteobacteria</taxon>
        <taxon>Burkholderiales</taxon>
        <taxon>Burkholderiaceae</taxon>
        <taxon>Ralstonia</taxon>
    </lineage>
</organism>
<keyword id="KW-0687">Ribonucleoprotein</keyword>
<keyword id="KW-0689">Ribosomal protein</keyword>
<keyword id="KW-0694">RNA-binding</keyword>
<keyword id="KW-0699">rRNA-binding</keyword>
<evidence type="ECO:0000255" key="1">
    <source>
        <dbReference type="HAMAP-Rule" id="MF_01331"/>
    </source>
</evidence>
<evidence type="ECO:0000305" key="2"/>